<sequence>MSGHILTVGLIVVVAHCATLSSSASTIPIQSQGKDFPVPFVSEQTDDFYDDKFYPDISDDNINEVVRDNGRKGGDRGRQSTPSGKESHPSATQTGGRRPSQSPCGESRPSGSATSGRRPSQSPRGESLPPATLAGRQNSRQQDRRQNKKQPDLSKYKNSPARYIFTTGNVDSGKTPDEERIFRTNRAEYVLATGGPYDNYLVEIIDGPNPNDISLKQSTTMGGDSKLILDNPNRNTIVGRIKTFKA</sequence>
<organism evidence="12">
    <name type="scientific">Phlebotomus papatasi</name>
    <name type="common">Sandfly</name>
    <dbReference type="NCBI Taxonomy" id="29031"/>
    <lineage>
        <taxon>Eukaryota</taxon>
        <taxon>Metazoa</taxon>
        <taxon>Ecdysozoa</taxon>
        <taxon>Arthropoda</taxon>
        <taxon>Hexapoda</taxon>
        <taxon>Insecta</taxon>
        <taxon>Pterygota</taxon>
        <taxon>Neoptera</taxon>
        <taxon>Endopterygota</taxon>
        <taxon>Diptera</taxon>
        <taxon>Nematocera</taxon>
        <taxon>Psychodoidea</taxon>
        <taxon>Psychodidae</taxon>
        <taxon>Phlebotomus</taxon>
        <taxon>Phlebotomus</taxon>
    </lineage>
</organism>
<dbReference type="EMBL" id="JX411944">
    <property type="protein sequence ID" value="AFY13225.1"/>
    <property type="molecule type" value="mRNA"/>
</dbReference>
<dbReference type="EMBL" id="OR492671">
    <property type="protein sequence ID" value="WML96174.1"/>
    <property type="molecule type" value="mRNA"/>
</dbReference>
<dbReference type="EMBL" id="AF335490">
    <property type="protein sequence ID" value="AAL11050.1"/>
    <property type="molecule type" value="mRNA"/>
</dbReference>
<dbReference type="EMBL" id="JQ988888">
    <property type="protein sequence ID" value="AGE83097.1"/>
    <property type="molecule type" value="mRNA"/>
</dbReference>
<dbReference type="VEuPathDB" id="VectorBase:PPAI002597"/>
<dbReference type="Proteomes" id="UP000092462">
    <property type="component" value="Unplaced"/>
</dbReference>
<dbReference type="GO" id="GO:0005576">
    <property type="term" value="C:extracellular region"/>
    <property type="evidence" value="ECO:0007669"/>
    <property type="project" value="UniProtKB-SubCell"/>
</dbReference>
<dbReference type="GO" id="GO:0002376">
    <property type="term" value="P:immune system process"/>
    <property type="evidence" value="ECO:0007669"/>
    <property type="project" value="UniProtKB-KW"/>
</dbReference>
<reference evidence="12" key="1">
    <citation type="journal article" date="2012" name="PLoS Negl. Trop. Dis.">
        <title>Salivary Antigen SP32 Is the Immunodominant Target of the Antibody Response to Phlebotomus papatasi Bites in Humans.</title>
        <authorList>
            <person name="Marzouki S."/>
            <person name="Abdeladhim M."/>
            <person name="Abdessalem C.B."/>
            <person name="Oliveira F."/>
            <person name="Ferjani B."/>
            <person name="Gilmore D."/>
            <person name="Louzir H."/>
            <person name="Valenzuela J.G."/>
            <person name="Ben Ahmed M."/>
        </authorList>
    </citation>
    <scope>NUCLEOTIDE SEQUENCE [MRNA]</scope>
    <scope>TISSUE SPECIFICITY</scope>
</reference>
<reference evidence="10" key="2">
    <citation type="journal article" date="2024" name="PLoS Negl. Trop. Dis.">
        <title>Correction: Salivary Antigen SP32 Is the Immunodominant Target of the Antibody Response to Phlebotomus papatasi Bites in Humans.</title>
        <authorList>
            <person name="Marzouki S."/>
            <person name="Abdeladhim M."/>
            <person name="Abdessalem C.B."/>
            <person name="Oliveira F."/>
            <person name="Ferjani B."/>
            <person name="Gilmore D."/>
            <person name="Louzir H."/>
            <person name="Valenzuela J.G."/>
            <person name="Ahmed M.B."/>
        </authorList>
    </citation>
    <scope>ERRATUM OF PUBMED:23209854</scope>
</reference>
<reference evidence="14" key="3">
    <citation type="submission" date="2023-08" db="EMBL/GenBank/DDBJ databases">
        <title>Cloning and expression of 32KD salivary gland protein of female Phlebotomus papatasi from endemic area of Iran.</title>
        <authorList>
            <person name="Davoudi N."/>
        </authorList>
    </citation>
    <scope>NUCLEOTIDE SEQUENCE [MRNA]</scope>
    <source>
        <strain evidence="14">ISFAHAN110</strain>
    </source>
</reference>
<reference evidence="11" key="4">
    <citation type="journal article" date="2001" name="J. Exp. Med.">
        <title>Toward a defined anti-Leishmania vaccine targeting vector antigens: characterization of a protective salivary protein.</title>
        <authorList>
            <person name="Valenzuela J.G."/>
            <person name="Belkaid Y."/>
            <person name="Garfield M.K."/>
            <person name="Mendez S."/>
            <person name="Kamhawi S."/>
            <person name="Rowton E.D."/>
            <person name="Sacks D.L."/>
            <person name="Ribeiro J.M."/>
        </authorList>
    </citation>
    <scope>NUCLEOTIDE SEQUENCE [LARGE SCALE MRNA]</scope>
    <scope>PROTEIN SEQUENCE OF 24-37</scope>
    <scope>TISSUE SPECIFICITY</scope>
</reference>
<reference evidence="13" key="5">
    <citation type="journal article" date="2012" name="PLoS ONE">
        <title>Updating the salivary gland transcriptome of Phlebotomus papatasi (Tunisian strain): the search for sand fly-secreted immunogenic proteins for humans.</title>
        <authorList>
            <person name="Abdeladhim M."/>
            <person name="Jochim R.C."/>
            <person name="Ben Ahmed M."/>
            <person name="Zhioua E."/>
            <person name="Chelbi I."/>
            <person name="Cherni S."/>
            <person name="Louzir H."/>
            <person name="Ribeiro J.M."/>
            <person name="Valenzuela J.G."/>
        </authorList>
    </citation>
    <scope>NUCLEOTIDE SEQUENCE [LARGE SCALE MRNA]</scope>
    <source>
        <tissue evidence="13">Salivary gland</tissue>
    </source>
</reference>
<reference evidence="10" key="6">
    <citation type="journal article" date="2020" name="JCI Insight">
        <title>Implicating bites from a leishmaniasis sand fly vector in the loss of tolerance in pemphigus.</title>
        <authorList>
            <person name="Marzouki S."/>
            <person name="Zaraa I."/>
            <person name="Abdeladhim M."/>
            <person name="Benabdesselem C."/>
            <person name="Oliveira F."/>
            <person name="Kamhawi S."/>
            <person name="Mokni M."/>
            <person name="Louzir H."/>
            <person name="Valenzuela J.G."/>
            <person name="Ben Ahmed M."/>
        </authorList>
    </citation>
    <scope>INTERACTION WITH HUMAN DSG1 AND DSG3</scope>
</reference>
<reference evidence="10" key="7">
    <citation type="journal article" date="2023" name="Parasit. Vectors">
        <title>PpSP32, the Phlebotomus papatasi immunodominant salivary protein, exerts immunomodulatory effects on human monocytes, macrophages, and lymphocytes.</title>
        <authorList>
            <person name="Souissi C."/>
            <person name="Marzouki S."/>
            <person name="Elbini-Dhouib I."/>
            <person name="Jebali J."/>
            <person name="Oliveira F."/>
            <person name="Valenzuela J.G."/>
            <person name="Srairi-Abid N."/>
            <person name="Kamhawi S."/>
            <person name="Ben Ahmed M."/>
        </authorList>
    </citation>
    <scope>FUNCTION</scope>
</reference>
<accession>K9N4Q4</accession>
<accession>A0AA51R3L5</accession>
<accession>M1JMR1</accession>
<accession>Q95WE0</accession>
<feature type="signal peptide" evidence="6">
    <location>
        <begin position="1"/>
        <end position="23"/>
    </location>
</feature>
<feature type="chain" id="PRO_5003933142" description="Salivary antigen SP32" evidence="10">
    <location>
        <begin position="24"/>
        <end position="246"/>
    </location>
</feature>
<feature type="region of interest" description="Disordered" evidence="1">
    <location>
        <begin position="51"/>
        <end position="160"/>
    </location>
</feature>
<feature type="compositionally biased region" description="Basic and acidic residues" evidence="1">
    <location>
        <begin position="65"/>
        <end position="78"/>
    </location>
</feature>
<feature type="compositionally biased region" description="Polar residues" evidence="1">
    <location>
        <begin position="79"/>
        <end position="124"/>
    </location>
</feature>
<feature type="compositionally biased region" description="Basic and acidic residues" evidence="1">
    <location>
        <begin position="141"/>
        <end position="155"/>
    </location>
</feature>
<feature type="sequence conflict" description="In Ref. 3; WML96174." evidence="10" ref="3">
    <original>IVVV</original>
    <variation>NVVM</variation>
    <location>
        <begin position="11"/>
        <end position="14"/>
    </location>
</feature>
<feature type="sequence conflict" description="In Ref. 5; AGE83097." evidence="10" ref="5">
    <original>K</original>
    <variation>Q</variation>
    <location>
        <position position="34"/>
    </location>
</feature>
<feature type="sequence conflict" description="In Ref. 4; AAL11050 and 3; WML96174." evidence="10" ref="4 3">
    <original>RQ</original>
    <variation>SK</variation>
    <location>
        <begin position="78"/>
        <end position="79"/>
    </location>
</feature>
<feature type="sequence conflict" description="In Ref. 5; AGE83097." evidence="10" ref="5">
    <original>R</original>
    <variation>S</variation>
    <location>
        <position position="78"/>
    </location>
</feature>
<feature type="sequence conflict" description="In Ref. 4; AAL11050." evidence="10" ref="4">
    <original>S</original>
    <variation>T</variation>
    <location>
        <position position="90"/>
    </location>
</feature>
<feature type="sequence conflict" description="In Ref. 4; AAL11050." evidence="10" ref="4">
    <original>G</original>
    <variation>S</variation>
    <location>
        <position position="95"/>
    </location>
</feature>
<feature type="sequence conflict" description="In Ref. 3; WML96174." evidence="10" ref="3">
    <original>P</original>
    <variation>S</variation>
    <location>
        <position position="151"/>
    </location>
</feature>
<feature type="sequence conflict" description="In Ref. 3; WML96174." evidence="10" ref="3">
    <original>P</original>
    <variation>S</variation>
    <location>
        <position position="160"/>
    </location>
</feature>
<feature type="sequence conflict" description="In Ref. 4; AAL11050." evidence="10" ref="4">
    <original>R</original>
    <variation>K</variation>
    <location>
        <position position="162"/>
    </location>
</feature>
<feature type="sequence conflict" description="In Ref. 4; AAL11050." evidence="10" ref="4">
    <original>L</original>
    <variation>V</variation>
    <location>
        <position position="201"/>
    </location>
</feature>
<feature type="sequence conflict" description="In Ref. 3; WML96174." evidence="10" ref="3">
    <original>NDIS</original>
    <variation>SDIG</variation>
    <location>
        <begin position="211"/>
        <end position="214"/>
    </location>
</feature>
<keyword id="KW-0903">Direct protein sequencing</keyword>
<keyword id="KW-0391">Immunity</keyword>
<keyword id="KW-0964">Secreted</keyword>
<keyword id="KW-0732">Signal</keyword>
<name>SP32_PHLPP</name>
<gene>
    <name evidence="12" type="primary">sp32</name>
</gene>
<proteinExistence type="evidence at protein level"/>
<evidence type="ECO:0000256" key="1">
    <source>
        <dbReference type="SAM" id="MobiDB-lite"/>
    </source>
</evidence>
<evidence type="ECO:0000269" key="2">
    <source>
    </source>
</evidence>
<evidence type="ECO:0000269" key="3">
    <source>
    </source>
</evidence>
<evidence type="ECO:0000269" key="4">
    <source>
    </source>
</evidence>
<evidence type="ECO:0000269" key="5">
    <source>
    </source>
</evidence>
<evidence type="ECO:0000269" key="6">
    <source>
    </source>
</evidence>
<evidence type="ECO:0000303" key="7">
    <source>
    </source>
</evidence>
<evidence type="ECO:0000303" key="8">
    <source>
    </source>
</evidence>
<evidence type="ECO:0000303" key="9">
    <source>
    </source>
</evidence>
<evidence type="ECO:0000305" key="10"/>
<evidence type="ECO:0000312" key="11">
    <source>
        <dbReference type="EMBL" id="AAL11050.1"/>
    </source>
</evidence>
<evidence type="ECO:0000312" key="12">
    <source>
        <dbReference type="EMBL" id="AFY13225.1"/>
    </source>
</evidence>
<evidence type="ECO:0000312" key="13">
    <source>
        <dbReference type="EMBL" id="AGE83097.1"/>
    </source>
</evidence>
<evidence type="ECO:0000312" key="14">
    <source>
        <dbReference type="EMBL" id="WML96174.1"/>
    </source>
</evidence>
<protein>
    <recommendedName>
        <fullName evidence="7 9">Salivary antigen SP32</fullName>
        <shortName evidence="7 8 9">PpSP32</shortName>
    </recommendedName>
</protein>
<comment type="function">
    <text evidence="5">Down-regulates the expression of CD86 and HLA-DR on the surface of lipopolysaccharide (LPS)-stimulated human peripheral blood mononuclear cells (PBMCs) (PubMed:36593519). Reduces LPS-induced secretion of IL-1beta/IL1B in human PBMCs (PubMed:36593519). Reduces LPS-induced secretion of various cytokines, such as IL-1beta, TNF-alpha/TNF, MCP-1/CCL2, IL6, IL27 and IL-1alpha/IL1A, in host cultured macrophages probably via inhibition of NF-kappa-B signaling pathway (PubMed:36593519). Reduces production of IFN-gamma/IFNG, IL4 and IL6 in human lymphocytes activated with PMA/ionomycin (PubMed:36593519). Exhibits anti-inflammatory activity in carrageenan-induced paw edema model in rats (PubMed:36593519).</text>
</comment>
<comment type="subunit">
    <text evidence="4">Interacts with human DSG1 (PubMed:33108348). Interacts with human DSG3 (PubMed:33108348).</text>
</comment>
<comment type="subcellular location">
    <subcellularLocation>
        <location evidence="10">Secreted</location>
    </subcellularLocation>
</comment>
<comment type="tissue specificity">
    <text evidence="2 3">Salivary gland (at protein level).</text>
</comment>
<comment type="miscellaneous">
    <text evidence="3 4 8">Immunogenic; triggers antibody response to Phlebotomus papatasi bites in humans (PubMed:23209854). Immunization of mice with the protein results in the development of antibodies specific for mouse DSG1 and DSG3 (PubMed:33108348). Exposure of people to Phlebotomus papatasi bites results in the development of antibodies specific for human DSG1 and DSG3 the titers of which are correlated with those of anti-PpSP32 antibodies (PubMed:33108348). Interaction of the protein with human DSG1 and DSG3 may trigger the production of specific anti-DSG1 and -DSG3 autoantibodies and promote the development of pemphigus vulgaris, an autoimmune bullous dermatosis (PubMed:33108348).</text>
</comment>